<proteinExistence type="inferred from homology"/>
<comment type="function">
    <text evidence="2">Chemoattractant for blood monocytes, memory T-helper cells and eosinophils. Causes the release of histamine from basophils and activates eosinophils. May activate several chemokine receptors including CCR1, CCR3, CCR4 and CCR5. May also be an agonist of the G protein-coupled receptor GPR75. Together with GPR75, may play a role in neuron survival through activation of a downstream signaling pathway involving the PI3, Akt and MAP kinases. By activating GPR75 may also play a role in insulin secretion by islet cells.</text>
</comment>
<comment type="subcellular location">
    <subcellularLocation>
        <location>Secreted</location>
    </subcellularLocation>
</comment>
<comment type="similarity">
    <text evidence="4">Belongs to the intercrine beta (chemokine CC) family.</text>
</comment>
<accession>O97919</accession>
<accession>Q3T192</accession>
<organism>
    <name type="scientific">Bos taurus</name>
    <name type="common">Bovine</name>
    <dbReference type="NCBI Taxonomy" id="9913"/>
    <lineage>
        <taxon>Eukaryota</taxon>
        <taxon>Metazoa</taxon>
        <taxon>Chordata</taxon>
        <taxon>Craniata</taxon>
        <taxon>Vertebrata</taxon>
        <taxon>Euteleostomi</taxon>
        <taxon>Mammalia</taxon>
        <taxon>Eutheria</taxon>
        <taxon>Laurasiatheria</taxon>
        <taxon>Artiodactyla</taxon>
        <taxon>Ruminantia</taxon>
        <taxon>Pecora</taxon>
        <taxon>Bovidae</taxon>
        <taxon>Bovinae</taxon>
        <taxon>Bos</taxon>
    </lineage>
</organism>
<evidence type="ECO:0000250" key="1"/>
<evidence type="ECO:0000250" key="2">
    <source>
        <dbReference type="UniProtKB" id="P13501"/>
    </source>
</evidence>
<evidence type="ECO:0000255" key="3"/>
<evidence type="ECO:0000305" key="4"/>
<gene>
    <name type="primary">CCL5</name>
    <name type="synonym">SCYA5</name>
</gene>
<reference key="1">
    <citation type="submission" date="1999-03" db="EMBL/GenBank/DDBJ databases">
        <title>Cloning of Bos taurus RANTES mRNA.</title>
        <authorList>
            <person name="Aust G."/>
            <person name="Thamm B."/>
            <person name="Rost A.K."/>
        </authorList>
    </citation>
    <scope>NUCLEOTIDE SEQUENCE [MRNA]</scope>
    <source>
        <tissue>Intestine</tissue>
    </source>
</reference>
<reference key="2">
    <citation type="submission" date="2007-11" db="EMBL/GenBank/DDBJ databases">
        <title>U.S. veterinary immune reagent network: expressed bovine gene sequences.</title>
        <authorList>
            <consortium name="U.S. Veterinary Immune Reagent Network"/>
            <person name="Hudgens T."/>
            <person name="Tompkins D."/>
            <person name="Baldwin C.L."/>
        </authorList>
    </citation>
    <scope>NUCLEOTIDE SEQUENCE [LARGE SCALE MRNA]</scope>
    <source>
        <strain>Belted Galloway</strain>
        <tissue>Peripheral blood</tissue>
    </source>
</reference>
<reference key="3">
    <citation type="submission" date="2005-08" db="EMBL/GenBank/DDBJ databases">
        <authorList>
            <consortium name="NIH - Mammalian Gene Collection (MGC) project"/>
        </authorList>
    </citation>
    <scope>NUCLEOTIDE SEQUENCE [LARGE SCALE MRNA]</scope>
    <source>
        <strain>Crossbred X Angus</strain>
        <tissue>Ileum</tissue>
    </source>
</reference>
<sequence length="91" mass="10059">MKVSATAFAVLLMAAALCAPASASPYASDTTPCCFAYISRPLPRTHVQEYFYTSSKCSMAAVVFITRKNRQVCANPEKKWVREYINALELS</sequence>
<feature type="signal peptide" evidence="3">
    <location>
        <begin position="1"/>
        <end position="23"/>
    </location>
</feature>
<feature type="chain" id="PRO_0000005170" description="C-C motif chemokine 5">
    <location>
        <begin position="24"/>
        <end position="91"/>
    </location>
</feature>
<feature type="disulfide bond" evidence="1">
    <location>
        <begin position="33"/>
        <end position="57"/>
    </location>
</feature>
<feature type="disulfide bond" evidence="1">
    <location>
        <begin position="34"/>
        <end position="73"/>
    </location>
</feature>
<feature type="sequence conflict" description="In Ref. 1; CAA07430." evidence="4" ref="1">
    <original>N</original>
    <variation>K</variation>
    <location>
        <position position="69"/>
    </location>
</feature>
<dbReference type="EMBL" id="AJ007043">
    <property type="protein sequence ID" value="CAA07430.1"/>
    <property type="molecule type" value="mRNA"/>
</dbReference>
<dbReference type="EMBL" id="EU276060">
    <property type="protein sequence ID" value="ABX72058.1"/>
    <property type="molecule type" value="mRNA"/>
</dbReference>
<dbReference type="EMBL" id="BC102064">
    <property type="protein sequence ID" value="AAI02065.1"/>
    <property type="molecule type" value="mRNA"/>
</dbReference>
<dbReference type="RefSeq" id="NP_787021.1">
    <property type="nucleotide sequence ID" value="NM_175827.2"/>
</dbReference>
<dbReference type="SMR" id="O97919"/>
<dbReference type="FunCoup" id="O97919">
    <property type="interactions" value="626"/>
</dbReference>
<dbReference type="STRING" id="9913.ENSBTAP00000057122"/>
<dbReference type="PaxDb" id="9913-ENSBTAP00000009463"/>
<dbReference type="Ensembl" id="ENSBTAT00000089057.1">
    <property type="protein sequence ID" value="ENSBTAP00000098561.1"/>
    <property type="gene ID" value="ENSBTAG00000066072.1"/>
</dbReference>
<dbReference type="GeneID" id="327712"/>
<dbReference type="KEGG" id="bta:327712"/>
<dbReference type="CTD" id="6352"/>
<dbReference type="VEuPathDB" id="HostDB:ENSBTAG00000053649"/>
<dbReference type="eggNOG" id="ENOG502S8D1">
    <property type="taxonomic scope" value="Eukaryota"/>
</dbReference>
<dbReference type="GeneTree" id="ENSGT01100000263482"/>
<dbReference type="HOGENOM" id="CLU_141716_4_2_1"/>
<dbReference type="InParanoid" id="O97919"/>
<dbReference type="OMA" id="HIQEYFY"/>
<dbReference type="OrthoDB" id="8900217at2759"/>
<dbReference type="TreeFam" id="TF334888"/>
<dbReference type="Reactome" id="R-BTA-380108">
    <property type="pathway name" value="Chemokine receptors bind chemokines"/>
</dbReference>
<dbReference type="Reactome" id="R-BTA-418594">
    <property type="pathway name" value="G alpha (i) signalling events"/>
</dbReference>
<dbReference type="Proteomes" id="UP000009136">
    <property type="component" value="Chromosome 19"/>
</dbReference>
<dbReference type="Bgee" id="ENSBTAG00000053649">
    <property type="expression patterns" value="Expressed in ileocecal valve and 96 other cell types or tissues"/>
</dbReference>
<dbReference type="GO" id="GO:0005737">
    <property type="term" value="C:cytoplasm"/>
    <property type="evidence" value="ECO:0007669"/>
    <property type="project" value="Ensembl"/>
</dbReference>
<dbReference type="GO" id="GO:0005615">
    <property type="term" value="C:extracellular space"/>
    <property type="evidence" value="ECO:0000318"/>
    <property type="project" value="GO_Central"/>
</dbReference>
<dbReference type="GO" id="GO:0048020">
    <property type="term" value="F:CCR chemokine receptor binding"/>
    <property type="evidence" value="ECO:0000318"/>
    <property type="project" value="GO_Central"/>
</dbReference>
<dbReference type="GO" id="GO:0031726">
    <property type="term" value="F:CCR1 chemokine receptor binding"/>
    <property type="evidence" value="ECO:0007669"/>
    <property type="project" value="Ensembl"/>
</dbReference>
<dbReference type="GO" id="GO:0031730">
    <property type="term" value="F:CCR5 chemokine receptor binding"/>
    <property type="evidence" value="ECO:0007669"/>
    <property type="project" value="Ensembl"/>
</dbReference>
<dbReference type="GO" id="GO:0042056">
    <property type="term" value="F:chemoattractant activity"/>
    <property type="evidence" value="ECO:0007669"/>
    <property type="project" value="Ensembl"/>
</dbReference>
<dbReference type="GO" id="GO:0008009">
    <property type="term" value="F:chemokine activity"/>
    <property type="evidence" value="ECO:0000318"/>
    <property type="project" value="GO_Central"/>
</dbReference>
<dbReference type="GO" id="GO:0046817">
    <property type="term" value="F:chemokine receptor antagonist activity"/>
    <property type="evidence" value="ECO:0007669"/>
    <property type="project" value="Ensembl"/>
</dbReference>
<dbReference type="GO" id="GO:0004435">
    <property type="term" value="F:phosphatidylinositol-4,5-bisphosphate phospholipase C activity"/>
    <property type="evidence" value="ECO:0007669"/>
    <property type="project" value="Ensembl"/>
</dbReference>
<dbReference type="GO" id="GO:0016004">
    <property type="term" value="F:phospholipase activator activity"/>
    <property type="evidence" value="ECO:0007669"/>
    <property type="project" value="Ensembl"/>
</dbReference>
<dbReference type="GO" id="GO:0042803">
    <property type="term" value="F:protein homodimerization activity"/>
    <property type="evidence" value="ECO:0007669"/>
    <property type="project" value="Ensembl"/>
</dbReference>
<dbReference type="GO" id="GO:0004672">
    <property type="term" value="F:protein kinase activity"/>
    <property type="evidence" value="ECO:0007669"/>
    <property type="project" value="Ensembl"/>
</dbReference>
<dbReference type="GO" id="GO:0030298">
    <property type="term" value="F:receptor signaling protein tyrosine kinase activator activity"/>
    <property type="evidence" value="ECO:0007669"/>
    <property type="project" value="Ensembl"/>
</dbReference>
<dbReference type="GO" id="GO:0061844">
    <property type="term" value="P:antimicrobial humoral immune response mediated by antimicrobial peptide"/>
    <property type="evidence" value="ECO:0000318"/>
    <property type="project" value="GO_Central"/>
</dbReference>
<dbReference type="GO" id="GO:0006816">
    <property type="term" value="P:calcium ion transport"/>
    <property type="evidence" value="ECO:0007669"/>
    <property type="project" value="Ensembl"/>
</dbReference>
<dbReference type="GO" id="GO:0007267">
    <property type="term" value="P:cell-cell signaling"/>
    <property type="evidence" value="ECO:0007669"/>
    <property type="project" value="Ensembl"/>
</dbReference>
<dbReference type="GO" id="GO:0044344">
    <property type="term" value="P:cellular response to fibroblast growth factor stimulus"/>
    <property type="evidence" value="ECO:0007669"/>
    <property type="project" value="Ensembl"/>
</dbReference>
<dbReference type="GO" id="GO:0071347">
    <property type="term" value="P:cellular response to interleukin-1"/>
    <property type="evidence" value="ECO:0007669"/>
    <property type="project" value="Ensembl"/>
</dbReference>
<dbReference type="GO" id="GO:0071356">
    <property type="term" value="P:cellular response to tumor necrosis factor"/>
    <property type="evidence" value="ECO:0007669"/>
    <property type="project" value="Ensembl"/>
</dbReference>
<dbReference type="GO" id="GO:0071346">
    <property type="term" value="P:cellular response to type II interferon"/>
    <property type="evidence" value="ECO:0007669"/>
    <property type="project" value="Ensembl"/>
</dbReference>
<dbReference type="GO" id="GO:0098586">
    <property type="term" value="P:cellular response to virus"/>
    <property type="evidence" value="ECO:0007669"/>
    <property type="project" value="Ensembl"/>
</dbReference>
<dbReference type="GO" id="GO:0035689">
    <property type="term" value="P:chemokine (C-C motif) ligand 5 signaling pathway"/>
    <property type="evidence" value="ECO:0007669"/>
    <property type="project" value="Ensembl"/>
</dbReference>
<dbReference type="GO" id="GO:0070098">
    <property type="term" value="P:chemokine-mediated signaling pathway"/>
    <property type="evidence" value="ECO:0000250"/>
    <property type="project" value="UniProtKB"/>
</dbReference>
<dbReference type="GO" id="GO:0048245">
    <property type="term" value="P:eosinophil chemotaxis"/>
    <property type="evidence" value="ECO:0000318"/>
    <property type="project" value="GO_Central"/>
</dbReference>
<dbReference type="GO" id="GO:0050673">
    <property type="term" value="P:epithelial cell proliferation"/>
    <property type="evidence" value="ECO:0007669"/>
    <property type="project" value="Ensembl"/>
</dbReference>
<dbReference type="GO" id="GO:0006887">
    <property type="term" value="P:exocytosis"/>
    <property type="evidence" value="ECO:0007669"/>
    <property type="project" value="Ensembl"/>
</dbReference>
<dbReference type="GO" id="GO:0007186">
    <property type="term" value="P:G protein-coupled receptor signaling pathway"/>
    <property type="evidence" value="ECO:0000250"/>
    <property type="project" value="UniProtKB"/>
</dbReference>
<dbReference type="GO" id="GO:0006954">
    <property type="term" value="P:inflammatory response"/>
    <property type="evidence" value="ECO:0000318"/>
    <property type="project" value="GO_Central"/>
</dbReference>
<dbReference type="GO" id="GO:0006874">
    <property type="term" value="P:intracellular calcium ion homeostasis"/>
    <property type="evidence" value="ECO:0007669"/>
    <property type="project" value="Ensembl"/>
</dbReference>
<dbReference type="GO" id="GO:0007159">
    <property type="term" value="P:leukocyte cell-cell adhesion"/>
    <property type="evidence" value="ECO:0007669"/>
    <property type="project" value="Ensembl"/>
</dbReference>
<dbReference type="GO" id="GO:0043922">
    <property type="term" value="P:negative regulation by host of viral transcription"/>
    <property type="evidence" value="ECO:0007669"/>
    <property type="project" value="Ensembl"/>
</dbReference>
<dbReference type="GO" id="GO:2000110">
    <property type="term" value="P:negative regulation of macrophage apoptotic process"/>
    <property type="evidence" value="ECO:0007669"/>
    <property type="project" value="Ensembl"/>
</dbReference>
<dbReference type="GO" id="GO:0070233">
    <property type="term" value="P:negative regulation of T cell apoptotic process"/>
    <property type="evidence" value="ECO:0007669"/>
    <property type="project" value="Ensembl"/>
</dbReference>
<dbReference type="GO" id="GO:0045071">
    <property type="term" value="P:negative regulation of viral genome replication"/>
    <property type="evidence" value="ECO:0007669"/>
    <property type="project" value="Ensembl"/>
</dbReference>
<dbReference type="GO" id="GO:0042119">
    <property type="term" value="P:neutrophil activation"/>
    <property type="evidence" value="ECO:0007669"/>
    <property type="project" value="Ensembl"/>
</dbReference>
<dbReference type="GO" id="GO:0031583">
    <property type="term" value="P:phospholipase D-activating G protein-coupled receptor signaling pathway"/>
    <property type="evidence" value="ECO:0007669"/>
    <property type="project" value="Ensembl"/>
</dbReference>
<dbReference type="GO" id="GO:0051928">
    <property type="term" value="P:positive regulation of calcium ion transport"/>
    <property type="evidence" value="ECO:0007669"/>
    <property type="project" value="Ensembl"/>
</dbReference>
<dbReference type="GO" id="GO:0030335">
    <property type="term" value="P:positive regulation of cell migration"/>
    <property type="evidence" value="ECO:0000318"/>
    <property type="project" value="GO_Central"/>
</dbReference>
<dbReference type="GO" id="GO:0033634">
    <property type="term" value="P:positive regulation of cell-cell adhesion mediated by integrin"/>
    <property type="evidence" value="ECO:0007669"/>
    <property type="project" value="Ensembl"/>
</dbReference>
<dbReference type="GO" id="GO:0050679">
    <property type="term" value="P:positive regulation of epithelial cell proliferation"/>
    <property type="evidence" value="ECO:0007669"/>
    <property type="project" value="Ensembl"/>
</dbReference>
<dbReference type="GO" id="GO:0045745">
    <property type="term" value="P:positive regulation of G protein-coupled receptor signaling pathway"/>
    <property type="evidence" value="ECO:0007669"/>
    <property type="project" value="Ensembl"/>
</dbReference>
<dbReference type="GO" id="GO:0034112">
    <property type="term" value="P:positive regulation of homotypic cell-cell adhesion"/>
    <property type="evidence" value="ECO:0007669"/>
    <property type="project" value="Ensembl"/>
</dbReference>
<dbReference type="GO" id="GO:0010759">
    <property type="term" value="P:positive regulation of macrophage chemotaxis"/>
    <property type="evidence" value="ECO:0007669"/>
    <property type="project" value="Ensembl"/>
</dbReference>
<dbReference type="GO" id="GO:0090026">
    <property type="term" value="P:positive regulation of monocyte chemotaxis"/>
    <property type="evidence" value="ECO:0007669"/>
    <property type="project" value="Ensembl"/>
</dbReference>
<dbReference type="GO" id="GO:2000503">
    <property type="term" value="P:positive regulation of natural killer cell chemotaxis"/>
    <property type="evidence" value="ECO:0007669"/>
    <property type="project" value="Ensembl"/>
</dbReference>
<dbReference type="GO" id="GO:0051897">
    <property type="term" value="P:positive regulation of phosphatidylinositol 3-kinase/protein kinase B signal transduction"/>
    <property type="evidence" value="ECO:0007669"/>
    <property type="project" value="Ensembl"/>
</dbReference>
<dbReference type="GO" id="GO:1904894">
    <property type="term" value="P:positive regulation of receptor signaling pathway via STAT"/>
    <property type="evidence" value="ECO:0007669"/>
    <property type="project" value="Ensembl"/>
</dbReference>
<dbReference type="GO" id="GO:0014911">
    <property type="term" value="P:positive regulation of smooth muscle cell migration"/>
    <property type="evidence" value="ECO:0007669"/>
    <property type="project" value="Ensembl"/>
</dbReference>
<dbReference type="GO" id="GO:0048661">
    <property type="term" value="P:positive regulation of smooth muscle cell proliferation"/>
    <property type="evidence" value="ECO:0007669"/>
    <property type="project" value="Ensembl"/>
</dbReference>
<dbReference type="GO" id="GO:0070234">
    <property type="term" value="P:positive regulation of T cell apoptotic process"/>
    <property type="evidence" value="ECO:0007669"/>
    <property type="project" value="Ensembl"/>
</dbReference>
<dbReference type="GO" id="GO:0010820">
    <property type="term" value="P:positive regulation of T cell chemotaxis"/>
    <property type="evidence" value="ECO:0007669"/>
    <property type="project" value="Ensembl"/>
</dbReference>
<dbReference type="GO" id="GO:0042102">
    <property type="term" value="P:positive regulation of T cell proliferation"/>
    <property type="evidence" value="ECO:0007669"/>
    <property type="project" value="Ensembl"/>
</dbReference>
<dbReference type="GO" id="GO:0032008">
    <property type="term" value="P:positive regulation of TOR signaling"/>
    <property type="evidence" value="ECO:0007669"/>
    <property type="project" value="Ensembl"/>
</dbReference>
<dbReference type="GO" id="GO:0050796">
    <property type="term" value="P:regulation of insulin secretion"/>
    <property type="evidence" value="ECO:0000250"/>
    <property type="project" value="UniProtKB"/>
</dbReference>
<dbReference type="GO" id="GO:0009636">
    <property type="term" value="P:response to toxic substance"/>
    <property type="evidence" value="ECO:0007669"/>
    <property type="project" value="Ensembl"/>
</dbReference>
<dbReference type="CDD" id="cd00272">
    <property type="entry name" value="Chemokine_CC"/>
    <property type="match status" value="1"/>
</dbReference>
<dbReference type="FunFam" id="2.40.50.40:FF:000002">
    <property type="entry name" value="C-C motif chemokine"/>
    <property type="match status" value="1"/>
</dbReference>
<dbReference type="Gene3D" id="2.40.50.40">
    <property type="match status" value="1"/>
</dbReference>
<dbReference type="InterPro" id="IPR039809">
    <property type="entry name" value="Chemokine_b/g/d"/>
</dbReference>
<dbReference type="InterPro" id="IPR000827">
    <property type="entry name" value="Chemokine_CC_CS"/>
</dbReference>
<dbReference type="InterPro" id="IPR001811">
    <property type="entry name" value="Chemokine_IL8-like_dom"/>
</dbReference>
<dbReference type="InterPro" id="IPR036048">
    <property type="entry name" value="Interleukin_8-like_sf"/>
</dbReference>
<dbReference type="PANTHER" id="PTHR12015:SF170">
    <property type="entry name" value="C-C MOTIF CHEMOKINE 5"/>
    <property type="match status" value="1"/>
</dbReference>
<dbReference type="PANTHER" id="PTHR12015">
    <property type="entry name" value="SMALL INDUCIBLE CYTOKINE A"/>
    <property type="match status" value="1"/>
</dbReference>
<dbReference type="Pfam" id="PF00048">
    <property type="entry name" value="IL8"/>
    <property type="match status" value="1"/>
</dbReference>
<dbReference type="SMART" id="SM00199">
    <property type="entry name" value="SCY"/>
    <property type="match status" value="1"/>
</dbReference>
<dbReference type="SUPFAM" id="SSF54117">
    <property type="entry name" value="Interleukin 8-like chemokines"/>
    <property type="match status" value="1"/>
</dbReference>
<dbReference type="PROSITE" id="PS00472">
    <property type="entry name" value="SMALL_CYTOKINES_CC"/>
    <property type="match status" value="1"/>
</dbReference>
<keyword id="KW-0145">Chemotaxis</keyword>
<keyword id="KW-0202">Cytokine</keyword>
<keyword id="KW-1015">Disulfide bond</keyword>
<keyword id="KW-0395">Inflammatory response</keyword>
<keyword id="KW-1185">Reference proteome</keyword>
<keyword id="KW-0964">Secreted</keyword>
<keyword id="KW-0732">Signal</keyword>
<name>CCL5_BOVIN</name>
<protein>
    <recommendedName>
        <fullName>C-C motif chemokine 5</fullName>
    </recommendedName>
    <alternativeName>
        <fullName>SIS-delta</fullName>
    </alternativeName>
    <alternativeName>
        <fullName>Small-inducible cytokine A5</fullName>
    </alternativeName>
    <alternativeName>
        <fullName>T-cell-specific protein RANTES</fullName>
    </alternativeName>
</protein>